<accession>P0AC19</accession>
<accession>P77796</accession>
<accession>P80449</accession>
<feature type="initiator methionine" description="Removed" evidence="3 5">
    <location>
        <position position="1"/>
    </location>
</feature>
<feature type="chain" id="PRO_0000168295" description="Dihydroneopterin triphosphate 2'-epimerase">
    <location>
        <begin position="2"/>
        <end position="120"/>
    </location>
</feature>
<feature type="sequence conflict" description="In Ref. 2; AAB47972." evidence="7" ref="2">
    <original>NNRQ</original>
    <variation>KQPS</variation>
    <location>
        <begin position="27"/>
        <end position="30"/>
    </location>
</feature>
<feature type="sequence conflict" description="In Ref. 2; AAB47972." evidence="7" ref="2">
    <original>SE</original>
    <variation>RQ</variation>
    <location>
        <begin position="48"/>
        <end position="49"/>
    </location>
</feature>
<feature type="sequence conflict" description="In Ref. 2; AAB47972." evidence="7" ref="2">
    <original>L</original>
    <variation>M</variation>
    <location>
        <position position="55"/>
    </location>
</feature>
<feature type="sequence conflict" description="In Ref. 2; AAB47972." evidence="7" ref="2">
    <original>R</original>
    <variation>A</variation>
    <location>
        <position position="107"/>
    </location>
</feature>
<feature type="strand" evidence="8">
    <location>
        <begin position="5"/>
        <end position="19"/>
    </location>
</feature>
<feature type="helix" evidence="8">
    <location>
        <begin position="23"/>
        <end position="27"/>
    </location>
</feature>
<feature type="strand" evidence="8">
    <location>
        <begin position="30"/>
        <end position="41"/>
    </location>
</feature>
<feature type="helix" evidence="8">
    <location>
        <begin position="42"/>
        <end position="46"/>
    </location>
</feature>
<feature type="helix" evidence="8">
    <location>
        <begin position="47"/>
        <end position="49"/>
    </location>
</feature>
<feature type="helix" evidence="8">
    <location>
        <begin position="57"/>
        <end position="69"/>
    </location>
</feature>
<feature type="strand" evidence="8">
    <location>
        <begin position="71"/>
        <end position="74"/>
    </location>
</feature>
<feature type="helix" evidence="8">
    <location>
        <begin position="76"/>
        <end position="87"/>
    </location>
</feature>
<feature type="strand" evidence="8">
    <location>
        <begin position="94"/>
        <end position="103"/>
    </location>
</feature>
<feature type="strand" evidence="8">
    <location>
        <begin position="109"/>
        <end position="119"/>
    </location>
</feature>
<gene>
    <name type="primary">folX</name>
    <name type="ordered locus">b2303</name>
    <name type="ordered locus">JW2300</name>
</gene>
<name>FOLX_ECOLI</name>
<proteinExistence type="evidence at protein level"/>
<keyword id="KW-0002">3D-structure</keyword>
<keyword id="KW-0903">Direct protein sequencing</keyword>
<keyword id="KW-0413">Isomerase</keyword>
<keyword id="KW-1185">Reference proteome</keyword>
<protein>
    <recommendedName>
        <fullName evidence="6">Dihydroneopterin triphosphate 2'-epimerase</fullName>
        <ecNumber evidence="3 4">5.1.99.7</ecNumber>
    </recommendedName>
    <alternativeName>
        <fullName>D-erythro-7,8-dihydroneopterin triphosphate epimerase</fullName>
    </alternativeName>
</protein>
<dbReference type="EC" id="5.1.99.7" evidence="3 4"/>
<dbReference type="EMBL" id="X96709">
    <property type="protein sequence ID" value="CAA65471.1"/>
    <property type="molecule type" value="Genomic_DNA"/>
</dbReference>
<dbReference type="EMBL" id="U47639">
    <property type="protein sequence ID" value="AAB47972.1"/>
    <property type="molecule type" value="Genomic_DNA"/>
</dbReference>
<dbReference type="EMBL" id="AP009048">
    <property type="protein sequence ID" value="BAA16140.1"/>
    <property type="molecule type" value="Genomic_DNA"/>
</dbReference>
<dbReference type="EMBL" id="U00096">
    <property type="protein sequence ID" value="AAC75363.1"/>
    <property type="molecule type" value="Genomic_DNA"/>
</dbReference>
<dbReference type="PIR" id="E65002">
    <property type="entry name" value="E65002"/>
</dbReference>
<dbReference type="RefSeq" id="NP_416806.1">
    <property type="nucleotide sequence ID" value="NC_000913.3"/>
</dbReference>
<dbReference type="RefSeq" id="WP_000068457.1">
    <property type="nucleotide sequence ID" value="NZ_STEB01000008.1"/>
</dbReference>
<dbReference type="PDB" id="1B9L">
    <property type="method" value="X-ray"/>
    <property type="resolution" value="2.90 A"/>
    <property type="chains" value="A/B/C/D/E/F/G/H=1-120"/>
</dbReference>
<dbReference type="PDBsum" id="1B9L"/>
<dbReference type="SMR" id="P0AC19"/>
<dbReference type="BioGRID" id="4260518">
    <property type="interactions" value="10"/>
</dbReference>
<dbReference type="DIP" id="DIP-9679N"/>
<dbReference type="FunCoup" id="P0AC19">
    <property type="interactions" value="52"/>
</dbReference>
<dbReference type="IntAct" id="P0AC19">
    <property type="interactions" value="3"/>
</dbReference>
<dbReference type="STRING" id="511145.b2303"/>
<dbReference type="jPOST" id="P0AC19"/>
<dbReference type="PaxDb" id="511145-b2303"/>
<dbReference type="EnsemblBacteria" id="AAC75363">
    <property type="protein sequence ID" value="AAC75363"/>
    <property type="gene ID" value="b2303"/>
</dbReference>
<dbReference type="GeneID" id="93774871"/>
<dbReference type="GeneID" id="946781"/>
<dbReference type="KEGG" id="ecj:JW2300"/>
<dbReference type="KEGG" id="eco:b2303"/>
<dbReference type="KEGG" id="ecoc:C3026_12845"/>
<dbReference type="PATRIC" id="fig|1411691.4.peg.4431"/>
<dbReference type="EchoBASE" id="EB4011"/>
<dbReference type="eggNOG" id="COG1539">
    <property type="taxonomic scope" value="Bacteria"/>
</dbReference>
<dbReference type="HOGENOM" id="CLU_112632_0_0_6"/>
<dbReference type="InParanoid" id="P0AC19"/>
<dbReference type="OMA" id="RDNDIDH"/>
<dbReference type="OrthoDB" id="1121389at2"/>
<dbReference type="PhylomeDB" id="P0AC19"/>
<dbReference type="BioCyc" id="EcoCyc:H2NTPEPIM-MONOMER"/>
<dbReference type="BioCyc" id="MetaCyc:H2NTPEPIM-MONOMER"/>
<dbReference type="BRENDA" id="5.1.99.7">
    <property type="organism ID" value="2026"/>
</dbReference>
<dbReference type="BRENDA" id="5.1.99.8">
    <property type="organism ID" value="2026"/>
</dbReference>
<dbReference type="SABIO-RK" id="P0AC19"/>
<dbReference type="EvolutionaryTrace" id="P0AC19"/>
<dbReference type="PRO" id="PR:P0AC19"/>
<dbReference type="Proteomes" id="UP000000625">
    <property type="component" value="Chromosome"/>
</dbReference>
<dbReference type="GO" id="GO:0005737">
    <property type="term" value="C:cytoplasm"/>
    <property type="evidence" value="ECO:0000318"/>
    <property type="project" value="GO_Central"/>
</dbReference>
<dbReference type="GO" id="GO:0005829">
    <property type="term" value="C:cytosol"/>
    <property type="evidence" value="ECO:0000314"/>
    <property type="project" value="EcoCyc"/>
</dbReference>
<dbReference type="GO" id="GO:0004150">
    <property type="term" value="F:dihydroneopterin aldolase activity"/>
    <property type="evidence" value="ECO:0007669"/>
    <property type="project" value="InterPro"/>
</dbReference>
<dbReference type="GO" id="GO:0008719">
    <property type="term" value="F:dihydroneopterin triphosphate 2'-epimerase activity"/>
    <property type="evidence" value="ECO:0000314"/>
    <property type="project" value="EcoCyc"/>
</dbReference>
<dbReference type="GO" id="GO:0042802">
    <property type="term" value="F:identical protein binding"/>
    <property type="evidence" value="ECO:0000314"/>
    <property type="project" value="EcoCyc"/>
</dbReference>
<dbReference type="GO" id="GO:0006760">
    <property type="term" value="P:folic acid-containing compound metabolic process"/>
    <property type="evidence" value="ECO:0007669"/>
    <property type="project" value="InterPro"/>
</dbReference>
<dbReference type="GO" id="GO:0042559">
    <property type="term" value="P:pteridine-containing compound biosynthetic process"/>
    <property type="evidence" value="ECO:0000315"/>
    <property type="project" value="EcoCyc"/>
</dbReference>
<dbReference type="CDD" id="cd00534">
    <property type="entry name" value="DHNA_DHNTPE"/>
    <property type="match status" value="1"/>
</dbReference>
<dbReference type="FunFam" id="3.30.1130.10:FF:000005">
    <property type="entry name" value="D-erythro-7,8-dihydroneopterin triphosphate epimerase"/>
    <property type="match status" value="1"/>
</dbReference>
<dbReference type="Gene3D" id="3.30.1130.10">
    <property type="match status" value="1"/>
</dbReference>
<dbReference type="InterPro" id="IPR006156">
    <property type="entry name" value="Dihydroneopterin_aldolase"/>
</dbReference>
<dbReference type="InterPro" id="IPR006157">
    <property type="entry name" value="FolB_dom"/>
</dbReference>
<dbReference type="InterPro" id="IPR043133">
    <property type="entry name" value="GTP-CH-I_C/QueF"/>
</dbReference>
<dbReference type="NCBIfam" id="TIGR00526">
    <property type="entry name" value="folB_dom"/>
    <property type="match status" value="1"/>
</dbReference>
<dbReference type="NCBIfam" id="NF008418">
    <property type="entry name" value="PRK11245.1"/>
    <property type="match status" value="1"/>
</dbReference>
<dbReference type="PANTHER" id="PTHR42844">
    <property type="entry name" value="DIHYDRONEOPTERIN ALDOLASE 1-RELATED"/>
    <property type="match status" value="1"/>
</dbReference>
<dbReference type="PANTHER" id="PTHR42844:SF10">
    <property type="entry name" value="DIHYDRONEOPTERIN TRIPHOSPHATE 2'-EPIMERASE"/>
    <property type="match status" value="1"/>
</dbReference>
<dbReference type="Pfam" id="PF02152">
    <property type="entry name" value="FolB"/>
    <property type="match status" value="1"/>
</dbReference>
<dbReference type="SMART" id="SM00905">
    <property type="entry name" value="FolB"/>
    <property type="match status" value="1"/>
</dbReference>
<dbReference type="SUPFAM" id="SSF55620">
    <property type="entry name" value="Tetrahydrobiopterin biosynthesis enzymes-like"/>
    <property type="match status" value="1"/>
</dbReference>
<comment type="function">
    <text evidence="2 3 4">Catalyzes the epimerization of carbon 2' of the side chain of 7,8-dihydroneopterin triphosphate (H2NTP) to form 7,8-dihydromonapterin triphosphate (H2MTP) (PubMed:9182560, PubMed:9651328). Is required for tetrahydromonapterin biosynthesis, a major pterin in E.coli (PubMed:19897652).</text>
</comment>
<comment type="catalytic activity">
    <reaction evidence="3 4">
        <text>7,8-dihydroneopterin 3'-triphosphate = 7,8-dihydromonapterin 3'-triphosphate</text>
        <dbReference type="Rhea" id="RHEA:28346"/>
        <dbReference type="ChEBI" id="CHEBI:58462"/>
        <dbReference type="ChEBI" id="CHEBI:61186"/>
        <dbReference type="EC" id="5.1.99.7"/>
    </reaction>
</comment>
<comment type="biophysicochemical properties">
    <kinetics>
        <KM evidence="4">13 uM for 7,8-dihydroneopterin triphosphate</KM>
        <KM evidence="4">149 uM for 7,8-dihydroneopterin</KM>
        <KM evidence="4">66 uM for 7,8-dihydromonapterin</KM>
        <Vmax evidence="4">480.0 umol/h/mg enzyme for the epimerization of 7,8-dihydroneopterin triphosphate</Vmax>
        <Vmax evidence="4">0.95 umol/h/mg enzyme for the epimerization of 7,8-dihydroneopterin</Vmax>
        <Vmax evidence="4">0.67 umol/h/mg enzyme for the epimerization of 7,8-dihydromonapterin</Vmax>
    </kinetics>
</comment>
<comment type="subunit">
    <text evidence="1 4">Homooctamer.</text>
</comment>
<comment type="disruption phenotype">
    <text evidence="2 4">Cells lacking this gene show no detectable growth defect on complete and minimal medium (PubMed:9651328). The folX deletion selectively eliminates monapterin production and secretion, but has no effect on the intra- and extracellular folate profiles (PubMed:19897652).</text>
</comment>
<comment type="similarity">
    <text evidence="7">Belongs to the DHNA family.</text>
</comment>
<reference key="1">
    <citation type="journal article" date="1997" name="J. Bacteriol.">
        <title>Dihydroneopterin triphosphate epimerase of Escherichia coli: purification, genetic cloning, and expression.</title>
        <authorList>
            <person name="Haussmann C."/>
            <person name="Rohdich F."/>
            <person name="Lottspeich F."/>
            <person name="Eberhardt S."/>
            <person name="Scheuring J."/>
            <person name="Mackamul S."/>
            <person name="Bacher A."/>
        </authorList>
    </citation>
    <scope>NUCLEOTIDE SEQUENCE [GENOMIC DNA]</scope>
    <scope>PARTIAL PROTEIN SEQUENCE</scope>
    <source>
        <strain>K12 / RR28</strain>
    </source>
</reference>
<reference key="2">
    <citation type="journal article" date="1997" name="J. Biol. Chem.">
        <title>Purification, cloning, and functional expression of dihydroneopterin triphosphate 2'-epimerase from Escherichia coli.</title>
        <authorList>
            <person name="Ahn C."/>
            <person name="Byun J."/>
            <person name="Yim J."/>
        </authorList>
    </citation>
    <scope>NUCLEOTIDE SEQUENCE [GENOMIC DNA]</scope>
    <scope>PROTEIN SEQUENCE OF 2-21</scope>
    <scope>FUNCTION</scope>
    <scope>CATALYTIC ACTIVITY</scope>
</reference>
<reference key="3">
    <citation type="journal article" date="1997" name="DNA Res.">
        <title>Construction of a contiguous 874-kb sequence of the Escherichia coli-K12 genome corresponding to 50.0-68.8 min on the linkage map and analysis of its sequence features.</title>
        <authorList>
            <person name="Yamamoto Y."/>
            <person name="Aiba H."/>
            <person name="Baba T."/>
            <person name="Hayashi K."/>
            <person name="Inada T."/>
            <person name="Isono K."/>
            <person name="Itoh T."/>
            <person name="Kimura S."/>
            <person name="Kitagawa M."/>
            <person name="Makino K."/>
            <person name="Miki T."/>
            <person name="Mitsuhashi N."/>
            <person name="Mizobuchi K."/>
            <person name="Mori H."/>
            <person name="Nakade S."/>
            <person name="Nakamura Y."/>
            <person name="Nashimoto H."/>
            <person name="Oshima T."/>
            <person name="Oyama S."/>
            <person name="Saito N."/>
            <person name="Sampei G."/>
            <person name="Satoh Y."/>
            <person name="Sivasundaram S."/>
            <person name="Tagami H."/>
            <person name="Takahashi H."/>
            <person name="Takeda J."/>
            <person name="Takemoto K."/>
            <person name="Uehara K."/>
            <person name="Wada C."/>
            <person name="Yamagata S."/>
            <person name="Horiuchi T."/>
        </authorList>
    </citation>
    <scope>NUCLEOTIDE SEQUENCE [LARGE SCALE GENOMIC DNA]</scope>
    <source>
        <strain>K12 / W3110 / ATCC 27325 / DSM 5911</strain>
    </source>
</reference>
<reference key="4">
    <citation type="journal article" date="1997" name="Science">
        <title>The complete genome sequence of Escherichia coli K-12.</title>
        <authorList>
            <person name="Blattner F.R."/>
            <person name="Plunkett G. III"/>
            <person name="Bloch C.A."/>
            <person name="Perna N.T."/>
            <person name="Burland V."/>
            <person name="Riley M."/>
            <person name="Collado-Vides J."/>
            <person name="Glasner J.D."/>
            <person name="Rode C.K."/>
            <person name="Mayhew G.F."/>
            <person name="Gregor J."/>
            <person name="Davis N.W."/>
            <person name="Kirkpatrick H.A."/>
            <person name="Goeden M.A."/>
            <person name="Rose D.J."/>
            <person name="Mau B."/>
            <person name="Shao Y."/>
        </authorList>
    </citation>
    <scope>NUCLEOTIDE SEQUENCE [LARGE SCALE GENOMIC DNA]</scope>
    <source>
        <strain>K12 / MG1655 / ATCC 47076</strain>
    </source>
</reference>
<reference key="5">
    <citation type="journal article" date="2006" name="Mol. Syst. Biol.">
        <title>Highly accurate genome sequences of Escherichia coli K-12 strains MG1655 and W3110.</title>
        <authorList>
            <person name="Hayashi K."/>
            <person name="Morooka N."/>
            <person name="Yamamoto Y."/>
            <person name="Fujita K."/>
            <person name="Isono K."/>
            <person name="Choi S."/>
            <person name="Ohtsubo E."/>
            <person name="Baba T."/>
            <person name="Wanner B.L."/>
            <person name="Mori H."/>
            <person name="Horiuchi T."/>
        </authorList>
    </citation>
    <scope>NUCLEOTIDE SEQUENCE [LARGE SCALE GENOMIC DNA]</scope>
    <source>
        <strain>K12 / W3110 / ATCC 27325 / DSM 5911</strain>
    </source>
</reference>
<reference key="6">
    <citation type="submission" date="1995-05" db="UniProtKB">
        <authorList>
            <person name="Haussmann C."/>
            <person name="Bacher A."/>
        </authorList>
    </citation>
    <scope>PROTEIN SEQUENCE OF 2-22</scope>
    <source>
        <strain>DSM 613</strain>
    </source>
</reference>
<reference key="7">
    <citation type="journal article" date="1998" name="J. Biol. Chem.">
        <title>Biosynthesis of pteridines in Escherichia coli. Structural and mechanistic similarity of dihydroneopterin-triphosphate epimerase and dihydroneopterin aldolase.</title>
        <authorList>
            <person name="Haussmann C."/>
            <person name="Rohdich F."/>
            <person name="Schmidt E."/>
            <person name="Bacher A."/>
            <person name="Richter G."/>
        </authorList>
    </citation>
    <scope>FUNCTION</scope>
    <scope>CATALYTIC ACTIVITY</scope>
    <scope>SUBUNIT</scope>
    <scope>BIOPHYSICOCHEMICAL PROPERTIES</scope>
    <scope>DISRUPTION PHENOTYPE</scope>
    <scope>REACTION MECHANISM</scope>
</reference>
<reference key="8">
    <citation type="journal article" date="2010" name="J. Bacteriol.">
        <title>FolX and FolM are essential for tetrahydromonapterin synthesis in Escherichia coli and Pseudomonas aeruginosa.</title>
        <authorList>
            <person name="Pribat A."/>
            <person name="Blaby I.K."/>
            <person name="Lara-Nunez A."/>
            <person name="Gregory J.F."/>
            <person name="de Crecy-Lagard V."/>
            <person name="Hanson A.D."/>
        </authorList>
    </citation>
    <scope>FUNCTION</scope>
    <scope>DISRUPTION PHENOTYPE</scope>
    <source>
        <strain>K12 / MG1655 / ATCC 47076</strain>
    </source>
</reference>
<reference key="9">
    <citation type="journal article" date="1999" name="Structure">
        <title>Crystal structure of 7,8-dihydroneopterin triphosphate epimerase.</title>
        <authorList>
            <person name="Ploom T."/>
            <person name="Haussmann C."/>
            <person name="Hof P."/>
            <person name="Steinbacher S."/>
            <person name="Bacher A."/>
            <person name="Richardson J."/>
            <person name="Huber R."/>
        </authorList>
    </citation>
    <scope>X-RAY CRYSTALLOGRAPHY (2.9 ANGSTROMS)</scope>
    <scope>SUBUNIT</scope>
</reference>
<evidence type="ECO:0000269" key="1">
    <source>
    </source>
</evidence>
<evidence type="ECO:0000269" key="2">
    <source>
    </source>
</evidence>
<evidence type="ECO:0000269" key="3">
    <source>
    </source>
</evidence>
<evidence type="ECO:0000269" key="4">
    <source>
    </source>
</evidence>
<evidence type="ECO:0000269" key="5">
    <source ref="6"/>
</evidence>
<evidence type="ECO:0000303" key="6">
    <source>
    </source>
</evidence>
<evidence type="ECO:0000305" key="7"/>
<evidence type="ECO:0007829" key="8">
    <source>
        <dbReference type="PDB" id="1B9L"/>
    </source>
</evidence>
<organism>
    <name type="scientific">Escherichia coli (strain K12)</name>
    <dbReference type="NCBI Taxonomy" id="83333"/>
    <lineage>
        <taxon>Bacteria</taxon>
        <taxon>Pseudomonadati</taxon>
        <taxon>Pseudomonadota</taxon>
        <taxon>Gammaproteobacteria</taxon>
        <taxon>Enterobacterales</taxon>
        <taxon>Enterobacteriaceae</taxon>
        <taxon>Escherichia</taxon>
    </lineage>
</organism>
<sequence>MAQPAAIIRIKNLRLRTFIGIKEEEINNRQDIVINVTIHYPADKARTSEDINDALNYRTVTKNIIQHVENNRFSLLEKLTQDVLDIAREHHWVTYAEVEIDKLHALRYADSVSMTLSWQR</sequence>